<evidence type="ECO:0000255" key="1">
    <source>
        <dbReference type="HAMAP-Rule" id="MF_01307"/>
    </source>
</evidence>
<evidence type="ECO:0000305" key="2"/>
<gene>
    <name evidence="1" type="primary">rpsE</name>
    <name type="ordered locus">Bfl208</name>
</gene>
<feature type="chain" id="PRO_0000131493" description="Small ribosomal subunit protein uS5">
    <location>
        <begin position="1"/>
        <end position="177"/>
    </location>
</feature>
<feature type="domain" description="S5 DRBM" evidence="1">
    <location>
        <begin position="14"/>
        <end position="77"/>
    </location>
</feature>
<reference key="1">
    <citation type="journal article" date="2003" name="Proc. Natl. Acad. Sci. U.S.A.">
        <title>The genome sequence of Blochmannia floridanus: comparative analysis of reduced genomes.</title>
        <authorList>
            <person name="Gil R."/>
            <person name="Silva F.J."/>
            <person name="Zientz E."/>
            <person name="Delmotte F."/>
            <person name="Gonzalez-Candelas F."/>
            <person name="Latorre A."/>
            <person name="Rausell C."/>
            <person name="Kamerbeek J."/>
            <person name="Gadau J."/>
            <person name="Hoelldobler B."/>
            <person name="van Ham R.C.H.J."/>
            <person name="Gross R."/>
            <person name="Moya A."/>
        </authorList>
    </citation>
    <scope>NUCLEOTIDE SEQUENCE [LARGE SCALE GENOMIC DNA]</scope>
</reference>
<comment type="function">
    <text evidence="1">With S4 and S12 plays an important role in translational accuracy.</text>
</comment>
<comment type="function">
    <text evidence="1">Located at the back of the 30S subunit body where it stabilizes the conformation of the head with respect to the body.</text>
</comment>
<comment type="subunit">
    <text evidence="1">Part of the 30S ribosomal subunit. Contacts proteins S4 and S8.</text>
</comment>
<comment type="domain">
    <text>The N-terminal domain interacts with the head of the 30S subunit; the C-terminal domain interacts with the body and contacts protein S4. The interaction surface between S4 and S5 is involved in control of translational fidelity.</text>
</comment>
<comment type="similarity">
    <text evidence="1">Belongs to the universal ribosomal protein uS5 family.</text>
</comment>
<dbReference type="EMBL" id="BX248583">
    <property type="protein sequence ID" value="CAD83723.1"/>
    <property type="molecule type" value="Genomic_DNA"/>
</dbReference>
<dbReference type="SMR" id="Q7VQD1"/>
<dbReference type="STRING" id="203907.Bfl208"/>
<dbReference type="KEGG" id="bfl:Bfl208"/>
<dbReference type="eggNOG" id="COG0098">
    <property type="taxonomic scope" value="Bacteria"/>
</dbReference>
<dbReference type="HOGENOM" id="CLU_065898_2_2_6"/>
<dbReference type="OrthoDB" id="9809045at2"/>
<dbReference type="Proteomes" id="UP000002192">
    <property type="component" value="Chromosome"/>
</dbReference>
<dbReference type="GO" id="GO:0015935">
    <property type="term" value="C:small ribosomal subunit"/>
    <property type="evidence" value="ECO:0007669"/>
    <property type="project" value="InterPro"/>
</dbReference>
<dbReference type="GO" id="GO:0019843">
    <property type="term" value="F:rRNA binding"/>
    <property type="evidence" value="ECO:0007669"/>
    <property type="project" value="UniProtKB-UniRule"/>
</dbReference>
<dbReference type="GO" id="GO:0003735">
    <property type="term" value="F:structural constituent of ribosome"/>
    <property type="evidence" value="ECO:0007669"/>
    <property type="project" value="InterPro"/>
</dbReference>
<dbReference type="GO" id="GO:0006412">
    <property type="term" value="P:translation"/>
    <property type="evidence" value="ECO:0007669"/>
    <property type="project" value="UniProtKB-UniRule"/>
</dbReference>
<dbReference type="FunFam" id="3.30.160.20:FF:000001">
    <property type="entry name" value="30S ribosomal protein S5"/>
    <property type="match status" value="1"/>
</dbReference>
<dbReference type="FunFam" id="3.30.230.10:FF:000002">
    <property type="entry name" value="30S ribosomal protein S5"/>
    <property type="match status" value="1"/>
</dbReference>
<dbReference type="Gene3D" id="3.30.160.20">
    <property type="match status" value="1"/>
</dbReference>
<dbReference type="Gene3D" id="3.30.230.10">
    <property type="match status" value="1"/>
</dbReference>
<dbReference type="HAMAP" id="MF_01307_B">
    <property type="entry name" value="Ribosomal_uS5_B"/>
    <property type="match status" value="1"/>
</dbReference>
<dbReference type="InterPro" id="IPR020568">
    <property type="entry name" value="Ribosomal_Su5_D2-typ_SF"/>
</dbReference>
<dbReference type="InterPro" id="IPR000851">
    <property type="entry name" value="Ribosomal_uS5"/>
</dbReference>
<dbReference type="InterPro" id="IPR005712">
    <property type="entry name" value="Ribosomal_uS5_bac-type"/>
</dbReference>
<dbReference type="InterPro" id="IPR005324">
    <property type="entry name" value="Ribosomal_uS5_C"/>
</dbReference>
<dbReference type="InterPro" id="IPR013810">
    <property type="entry name" value="Ribosomal_uS5_N"/>
</dbReference>
<dbReference type="InterPro" id="IPR018192">
    <property type="entry name" value="Ribosomal_uS5_N_CS"/>
</dbReference>
<dbReference type="InterPro" id="IPR014721">
    <property type="entry name" value="Ribsml_uS5_D2-typ_fold_subgr"/>
</dbReference>
<dbReference type="NCBIfam" id="TIGR01021">
    <property type="entry name" value="rpsE_bact"/>
    <property type="match status" value="1"/>
</dbReference>
<dbReference type="PANTHER" id="PTHR48277">
    <property type="entry name" value="MITOCHONDRIAL RIBOSOMAL PROTEIN S5"/>
    <property type="match status" value="1"/>
</dbReference>
<dbReference type="PANTHER" id="PTHR48277:SF1">
    <property type="entry name" value="MITOCHONDRIAL RIBOSOMAL PROTEIN S5"/>
    <property type="match status" value="1"/>
</dbReference>
<dbReference type="Pfam" id="PF00333">
    <property type="entry name" value="Ribosomal_S5"/>
    <property type="match status" value="1"/>
</dbReference>
<dbReference type="Pfam" id="PF03719">
    <property type="entry name" value="Ribosomal_S5_C"/>
    <property type="match status" value="1"/>
</dbReference>
<dbReference type="SUPFAM" id="SSF54768">
    <property type="entry name" value="dsRNA-binding domain-like"/>
    <property type="match status" value="1"/>
</dbReference>
<dbReference type="SUPFAM" id="SSF54211">
    <property type="entry name" value="Ribosomal protein S5 domain 2-like"/>
    <property type="match status" value="1"/>
</dbReference>
<dbReference type="PROSITE" id="PS00585">
    <property type="entry name" value="RIBOSOMAL_S5"/>
    <property type="match status" value="1"/>
</dbReference>
<dbReference type="PROSITE" id="PS50881">
    <property type="entry name" value="S5_DSRBD"/>
    <property type="match status" value="1"/>
</dbReference>
<accession>Q7VQD1</accession>
<protein>
    <recommendedName>
        <fullName evidence="1">Small ribosomal subunit protein uS5</fullName>
    </recommendedName>
    <alternativeName>
        <fullName evidence="2">30S ribosomal protein S5</fullName>
    </alternativeName>
</protein>
<name>RS5_BLOFL</name>
<keyword id="KW-1185">Reference proteome</keyword>
<keyword id="KW-0687">Ribonucleoprotein</keyword>
<keyword id="KW-0689">Ribosomal protein</keyword>
<keyword id="KW-0694">RNA-binding</keyword>
<keyword id="KW-0699">rRNA-binding</keyword>
<sequence>MRYSNKQTSNIHELQEKLITVNRVSKTVKGGRVFSFAALTVVGNVNGRVGFGYGKAREVPSAIQKAMEKARHNMIDIPLNPGRTLQHSIIGIYTGARIYMKPASEGTGIIAGGAMRAILEVVGIHNVLAKAYGSTNPINIVRATVNALKNMKSPEMVAEKRGKSLEYILNNYTYNGR</sequence>
<organism>
    <name type="scientific">Blochmanniella floridana</name>
    <dbReference type="NCBI Taxonomy" id="203907"/>
    <lineage>
        <taxon>Bacteria</taxon>
        <taxon>Pseudomonadati</taxon>
        <taxon>Pseudomonadota</taxon>
        <taxon>Gammaproteobacteria</taxon>
        <taxon>Enterobacterales</taxon>
        <taxon>Enterobacteriaceae</taxon>
        <taxon>ant endosymbionts</taxon>
        <taxon>Candidatus Blochmanniella</taxon>
    </lineage>
</organism>
<proteinExistence type="inferred from homology"/>